<feature type="chain" id="PRO_1000139659" description="UPF0229 protein YeaH">
    <location>
        <begin position="1"/>
        <end position="427"/>
    </location>
</feature>
<feature type="region of interest" description="Disordered" evidence="2">
    <location>
        <begin position="79"/>
        <end position="110"/>
    </location>
</feature>
<feature type="compositionally biased region" description="Basic and acidic residues" evidence="2">
    <location>
        <begin position="79"/>
        <end position="90"/>
    </location>
</feature>
<feature type="compositionally biased region" description="Gly residues" evidence="2">
    <location>
        <begin position="92"/>
        <end position="102"/>
    </location>
</feature>
<comment type="similarity">
    <text evidence="1">Belongs to the UPF0229 family.</text>
</comment>
<proteinExistence type="inferred from homology"/>
<gene>
    <name evidence="1" type="primary">yeaH</name>
    <name type="ordered locus">SbBS512_E2032</name>
</gene>
<accession>B2U416</accession>
<dbReference type="EMBL" id="CP001063">
    <property type="protein sequence ID" value="ACD07260.1"/>
    <property type="molecule type" value="Genomic_DNA"/>
</dbReference>
<dbReference type="RefSeq" id="WP_000219706.1">
    <property type="nucleotide sequence ID" value="NC_010658.1"/>
</dbReference>
<dbReference type="SMR" id="B2U416"/>
<dbReference type="STRING" id="344609.SbBS512_E2032"/>
<dbReference type="KEGG" id="sbc:SbBS512_E2032"/>
<dbReference type="HOGENOM" id="CLU_049702_0_0_6"/>
<dbReference type="Proteomes" id="UP000001030">
    <property type="component" value="Chromosome"/>
</dbReference>
<dbReference type="HAMAP" id="MF_01232">
    <property type="entry name" value="UPF0229"/>
    <property type="match status" value="1"/>
</dbReference>
<dbReference type="InterPro" id="IPR006698">
    <property type="entry name" value="UPF0229"/>
</dbReference>
<dbReference type="NCBIfam" id="NF003707">
    <property type="entry name" value="PRK05325.1-2"/>
    <property type="match status" value="1"/>
</dbReference>
<dbReference type="NCBIfam" id="NF003708">
    <property type="entry name" value="PRK05325.1-3"/>
    <property type="match status" value="1"/>
</dbReference>
<dbReference type="PANTHER" id="PTHR30510">
    <property type="entry name" value="UPF0229 PROTEIN YEAH"/>
    <property type="match status" value="1"/>
</dbReference>
<dbReference type="PANTHER" id="PTHR30510:SF2">
    <property type="entry name" value="UPF0229 PROTEIN YEAH"/>
    <property type="match status" value="1"/>
</dbReference>
<dbReference type="Pfam" id="PF04285">
    <property type="entry name" value="DUF444"/>
    <property type="match status" value="1"/>
</dbReference>
<protein>
    <recommendedName>
        <fullName evidence="1">UPF0229 protein YeaH</fullName>
    </recommendedName>
</protein>
<evidence type="ECO:0000255" key="1">
    <source>
        <dbReference type="HAMAP-Rule" id="MF_01232"/>
    </source>
</evidence>
<evidence type="ECO:0000256" key="2">
    <source>
        <dbReference type="SAM" id="MobiDB-lite"/>
    </source>
</evidence>
<organism>
    <name type="scientific">Shigella boydii serotype 18 (strain CDC 3083-94 / BS512)</name>
    <dbReference type="NCBI Taxonomy" id="344609"/>
    <lineage>
        <taxon>Bacteria</taxon>
        <taxon>Pseudomonadati</taxon>
        <taxon>Pseudomonadota</taxon>
        <taxon>Gammaproteobacteria</taxon>
        <taxon>Enterobacterales</taxon>
        <taxon>Enterobacteriaceae</taxon>
        <taxon>Shigella</taxon>
    </lineage>
</organism>
<sequence length="427" mass="49469">MTWFIDRRLNGKNKSMVNRQRFLRRYKAQIKQSISEAMNKRSVTDVDSGESVSIPTEDISEPMFHQGRGGLRHRVHPGNDHFVQNDRIERPQGGGGGSGSGQGQASQDGEGQDEFVFQISKDEYLDLLFEDLALPNLKQNQQRQLTEYKTHRAGYTANGVPANISVVRSLQNSLARRTAMTAGKRRELHALEENLAIISNSEPAQLLEEERLRKEIAELRAKIERVPFIDTFDLRYKNYEKRPDPSSQAVMFCLMDVSGSMDQSTKDMAKRFYILLYLFLSRTYKNVEVVYIRHHTQAKEVDEHEFFYSQETGGTIVSSALKLMDEVVKERYNPAQWNIYAAQASDGDNWADDSPLCHEILAKKLLPVVRYYSYIEITRRAHQTLWREYEHLQSTFDNFAMQHIRDQDDIYPVFRELFHKQNATAKD</sequence>
<keyword id="KW-1185">Reference proteome</keyword>
<name>YEAH_SHIB3</name>
<reference key="1">
    <citation type="submission" date="2008-05" db="EMBL/GenBank/DDBJ databases">
        <title>Complete sequence of Shigella boydii serotype 18 strain BS512.</title>
        <authorList>
            <person name="Rasko D.A."/>
            <person name="Rosovitz M."/>
            <person name="Maurelli A.T."/>
            <person name="Myers G."/>
            <person name="Seshadri R."/>
            <person name="Cer R."/>
            <person name="Jiang L."/>
            <person name="Ravel J."/>
            <person name="Sebastian Y."/>
        </authorList>
    </citation>
    <scope>NUCLEOTIDE SEQUENCE [LARGE SCALE GENOMIC DNA]</scope>
    <source>
        <strain>CDC 3083-94 / BS512</strain>
    </source>
</reference>